<keyword id="KW-0002">3D-structure</keyword>
<keyword id="KW-0175">Coiled coil</keyword>
<keyword id="KW-0903">Direct protein sequencing</keyword>
<keyword id="KW-0256">Endoplasmic reticulum</keyword>
<keyword id="KW-0967">Endosome</keyword>
<keyword id="KW-0325">Glycoprotein</keyword>
<keyword id="KW-0333">Golgi apparatus</keyword>
<keyword id="KW-0358">Heparin-binding</keyword>
<keyword id="KW-0597">Phosphoprotein</keyword>
<keyword id="KW-1185">Reference proteome</keyword>
<keyword id="KW-0732">Signal</keyword>
<reference key="1">
    <citation type="journal article" date="2004" name="Genome Res.">
        <title>The status, quality, and expansion of the NIH full-length cDNA project: the Mammalian Gene Collection (MGC).</title>
        <authorList>
            <consortium name="The MGC Project Team"/>
        </authorList>
    </citation>
    <scope>NUCLEOTIDE SEQUENCE [LARGE SCALE MRNA]</scope>
    <source>
        <tissue>Kidney</tissue>
        <tissue>Placenta</tissue>
    </source>
</reference>
<reference key="2">
    <citation type="journal article" date="1993" name="J. Biol. Chem.">
        <title>Analysis of a 45-kDa protein that binds to the Heymann nephritis autoantigen GP330.</title>
        <authorList>
            <person name="Kanalas J.J."/>
            <person name="Makker S.P."/>
        </authorList>
    </citation>
    <scope>NUCLEOTIDE SEQUENCE [MRNA] OF 4-360</scope>
    <source>
        <strain>Sprague-Dawley</strain>
        <tissue>Kidney</tissue>
    </source>
</reference>
<reference key="3">
    <citation type="journal article" date="1990" name="Proc. Natl. Acad. Sci. U.S.A.">
        <title>Molecular cloning of a cDNA encoding a major pathogenic domain of the Heymann nephritis antigen gp330.</title>
        <authorList>
            <person name="Pietromonaco S."/>
            <person name="Kerjaschki D."/>
            <person name="Binder S."/>
            <person name="Ullrich R."/>
            <person name="Farquhar M.G."/>
        </authorList>
    </citation>
    <scope>NUCLEOTIDE SEQUENCE [MRNA] OF 38-360</scope>
</reference>
<reference key="4">
    <citation type="journal article" date="1991" name="J. Biol. Chem.">
        <title>39-kDa protein modulates binding of ligands to low density lipoprotein receptor-related protein/alpha 2-macroglobulin receptor.</title>
        <authorList>
            <person name="Herz J."/>
            <person name="Goldstein J.L."/>
            <person name="Strickland D.K."/>
            <person name="Ho Y.K."/>
            <person name="Brown M.S."/>
        </authorList>
    </citation>
    <scope>PROTEIN SEQUENCE OF 38-51</scope>
</reference>
<reference key="5">
    <citation type="journal article" date="1992" name="J. Biol. Chem.">
        <title>The 39-kDa receptor-associated protein interacts with two members of the low density lipoprotein receptor family, alpha 2-macroglobulin receptor and glycoprotein 330.</title>
        <authorList>
            <person name="Kounnas M.Z."/>
            <person name="Argraves W.S."/>
            <person name="Strickland D.K."/>
        </authorList>
    </citation>
    <scope>INTERACTION WITH INTERACTION WITH LRP1 AND LRP2</scope>
</reference>
<reference key="6">
    <citation type="journal article" date="2012" name="Nat. Commun.">
        <title>Quantitative maps of protein phosphorylation sites across 14 different rat organs and tissues.</title>
        <authorList>
            <person name="Lundby A."/>
            <person name="Secher A."/>
            <person name="Lage K."/>
            <person name="Nordsborg N.B."/>
            <person name="Dmytriyev A."/>
            <person name="Lundby C."/>
            <person name="Olsen J.V."/>
        </authorList>
    </citation>
    <scope>PHOSPHORYLATION [LARGE SCALE ANALYSIS] AT SER-53</scope>
    <scope>IDENTIFICATION BY MASS SPECTROMETRY [LARGE SCALE ANALYSIS]</scope>
</reference>
<comment type="function">
    <text evidence="1">Molecular chaperone for LDL receptor-related proteins that may regulate their ligand binding activity along the secretory pathway.</text>
</comment>
<comment type="subunit">
    <text evidence="1 4">Interacts with the LRP1/alpha-2-macroglobulin receptor heavy and light chains; the interaction is transient and coincides with a reduction of ligand binding by the receptor (PubMed:1400426). Interacts with LRP2/glycoprotein 330 (PubMed:1400426). Interacts with LRP1B; binding is followed by internalization and degradation. Interacts with LDLR (By similarity). Interacts with SORL1 (By similarity). Interacts with LRP1; this interaction is followed by rapid internalization (By similarity).</text>
</comment>
<comment type="interaction">
    <interactant intactId="EBI-919734">
        <id>Q99068</id>
    </interactant>
    <interactant intactId="EBI-432319">
        <id>Q924X6</id>
        <label>Lrp8</label>
    </interactant>
    <organismsDiffer>true</organismsDiffer>
    <experiments>2</experiments>
</comment>
<comment type="interaction">
    <interactant intactId="EBI-919734">
        <id>Q99068</id>
    </interactant>
    <interactant intactId="EBI-9004309">
        <id>P98155</id>
        <label>VLDLR</label>
    </interactant>
    <organismsDiffer>true</organismsDiffer>
    <experiments>2</experiments>
</comment>
<comment type="subcellular location">
    <subcellularLocation>
        <location evidence="1">Rough endoplasmic reticulum lumen</location>
    </subcellularLocation>
    <subcellularLocation>
        <location evidence="1">Endoplasmic reticulum-Golgi intermediate compartment lumen</location>
    </subcellularLocation>
    <subcellularLocation>
        <location evidence="1">Golgi apparatus</location>
        <location evidence="1">cis-Golgi network</location>
    </subcellularLocation>
    <subcellularLocation>
        <location evidence="1">Golgi apparatus lumen</location>
    </subcellularLocation>
    <subcellularLocation>
        <location evidence="1">Endosome lumen</location>
    </subcellularLocation>
    <subcellularLocation>
        <location evidence="1">Cell surface</location>
    </subcellularLocation>
    <text evidence="1">May be associated with receptors at the cell surface.</text>
</comment>
<comment type="PTM">
    <text evidence="1">N-glycosylated.</text>
</comment>
<comment type="similarity">
    <text evidence="5">Belongs to the alpha-2-MRAP family.</text>
</comment>
<comment type="caution">
    <text evidence="6">Was originally thought to be Heymann nephritis antigen gp330.</text>
</comment>
<protein>
    <recommendedName>
        <fullName>Alpha-2-macroglobulin receptor-associated protein</fullName>
        <shortName>Alpha-2-MRAP</shortName>
    </recommendedName>
    <alternativeName>
        <fullName>Gp330-binding 45 kDa protein</fullName>
    </alternativeName>
    <alternativeName>
        <fullName>Low density lipoprotein receptor-related protein-associated protein 1</fullName>
        <shortName>RAP</shortName>
    </alternativeName>
</protein>
<accession>Q99068</accession>
<accession>Q4FZX8</accession>
<accession>Q642A1</accession>
<accession>Q64723</accession>
<name>AMRP_RAT</name>
<gene>
    <name type="primary">Lrpap1</name>
</gene>
<sequence length="360" mass="42032">MAPLRDRVSTLPRLQLLVLLLLPLLLVPQPIAGHGGKYSREKNEPEMAAKRESGEEFRMEKLNQLWEKAKRLHLSPVRLAELHSDLKIQERDELNWKKLKVEGLDGDGEKEAKLVHNLNVILARYGLDGRKDTQTVHSNALNEDTQDELGDPRLEKLWHKAKTSGKFSSEELDKLWREFLHYKEKIHEYNVLLDTLSRAEEGYENLLSPSDMTHIKSDTLASKHSELKDRLRSINQGLDRLRKVSHQGYGPATEFEEPRVIDLWDLAQSANFTEKELESFREELKHFEAKIEKHNHYQKQLEISHQKLKHVESIGDPEHISRNKEKYVLLEEKTKELGYKVKKHLQDLSSRVSRARHNEL</sequence>
<evidence type="ECO:0000250" key="1">
    <source>
        <dbReference type="UniProtKB" id="P30533"/>
    </source>
</evidence>
<evidence type="ECO:0000250" key="2">
    <source>
        <dbReference type="UniProtKB" id="P55302"/>
    </source>
</evidence>
<evidence type="ECO:0000255" key="3"/>
<evidence type="ECO:0000269" key="4">
    <source>
    </source>
</evidence>
<evidence type="ECO:0000305" key="5"/>
<evidence type="ECO:0000305" key="6">
    <source>
    </source>
</evidence>
<evidence type="ECO:0007744" key="7">
    <source>
    </source>
</evidence>
<evidence type="ECO:0007829" key="8">
    <source>
        <dbReference type="PDB" id="8JXG"/>
    </source>
</evidence>
<evidence type="ECO:0007829" key="9">
    <source>
        <dbReference type="PDB" id="8JXI"/>
    </source>
</evidence>
<proteinExistence type="evidence at protein level"/>
<organism>
    <name type="scientific">Rattus norvegicus</name>
    <name type="common">Rat</name>
    <dbReference type="NCBI Taxonomy" id="10116"/>
    <lineage>
        <taxon>Eukaryota</taxon>
        <taxon>Metazoa</taxon>
        <taxon>Chordata</taxon>
        <taxon>Craniata</taxon>
        <taxon>Vertebrata</taxon>
        <taxon>Euteleostomi</taxon>
        <taxon>Mammalia</taxon>
        <taxon>Eutheria</taxon>
        <taxon>Euarchontoglires</taxon>
        <taxon>Glires</taxon>
        <taxon>Rodentia</taxon>
        <taxon>Myomorpha</taxon>
        <taxon>Muroidea</taxon>
        <taxon>Muridae</taxon>
        <taxon>Murinae</taxon>
        <taxon>Rattus</taxon>
    </lineage>
</organism>
<dbReference type="EMBL" id="BC082020">
    <property type="protein sequence ID" value="AAH82020.1"/>
    <property type="molecule type" value="mRNA"/>
</dbReference>
<dbReference type="EMBL" id="BC098947">
    <property type="protein sequence ID" value="AAH98947.1"/>
    <property type="molecule type" value="mRNA"/>
</dbReference>
<dbReference type="EMBL" id="Z11994">
    <property type="protein sequence ID" value="CAA78040.1"/>
    <property type="molecule type" value="mRNA"/>
</dbReference>
<dbReference type="EMBL" id="Z11995">
    <property type="protein sequence ID" value="CAA78041.1"/>
    <property type="molecule type" value="mRNA"/>
</dbReference>
<dbReference type="EMBL" id="M31051">
    <property type="protein sequence ID" value="AAA41269.1"/>
    <property type="molecule type" value="mRNA"/>
</dbReference>
<dbReference type="PIR" id="A46646">
    <property type="entry name" value="A46646"/>
</dbReference>
<dbReference type="RefSeq" id="NP_001162584.1">
    <property type="nucleotide sequence ID" value="NM_001169113.1"/>
</dbReference>
<dbReference type="PDB" id="8JUT">
    <property type="method" value="EM"/>
    <property type="resolution" value="4.20 A"/>
    <property type="chains" value="C/D=1-360"/>
</dbReference>
<dbReference type="PDB" id="8JXF">
    <property type="method" value="EM"/>
    <property type="resolution" value="3.60 A"/>
    <property type="chains" value="C=1-360"/>
</dbReference>
<dbReference type="PDB" id="8JXG">
    <property type="method" value="EM"/>
    <property type="resolution" value="3.20 A"/>
    <property type="chains" value="D=30-360"/>
</dbReference>
<dbReference type="PDB" id="8JXH">
    <property type="method" value="EM"/>
    <property type="resolution" value="3.50 A"/>
    <property type="chains" value="D=34-360"/>
</dbReference>
<dbReference type="PDB" id="8JXI">
    <property type="method" value="EM"/>
    <property type="resolution" value="3.40 A"/>
    <property type="chains" value="C=34-360"/>
</dbReference>
<dbReference type="PDBsum" id="8JUT"/>
<dbReference type="PDBsum" id="8JXF"/>
<dbReference type="PDBsum" id="8JXG"/>
<dbReference type="PDBsum" id="8JXH"/>
<dbReference type="PDBsum" id="8JXI"/>
<dbReference type="EMDB" id="EMD-36663"/>
<dbReference type="EMDB" id="EMD-36699"/>
<dbReference type="EMDB" id="EMD-36700"/>
<dbReference type="EMDB" id="EMD-36701"/>
<dbReference type="EMDB" id="EMD-36702"/>
<dbReference type="SMR" id="Q99068"/>
<dbReference type="BioGRID" id="250500">
    <property type="interactions" value="1"/>
</dbReference>
<dbReference type="FunCoup" id="Q99068">
    <property type="interactions" value="762"/>
</dbReference>
<dbReference type="IntAct" id="Q99068">
    <property type="interactions" value="5"/>
</dbReference>
<dbReference type="MINT" id="Q99068"/>
<dbReference type="STRING" id="10116.ENSRNOP00000012665"/>
<dbReference type="GlyCosmos" id="Q99068">
    <property type="glycosylation" value="1 site, No reported glycans"/>
</dbReference>
<dbReference type="GlyGen" id="Q99068">
    <property type="glycosylation" value="1 site"/>
</dbReference>
<dbReference type="iPTMnet" id="Q99068"/>
<dbReference type="PhosphoSitePlus" id="Q99068"/>
<dbReference type="SwissPalm" id="Q99068"/>
<dbReference type="jPOST" id="Q99068"/>
<dbReference type="PaxDb" id="10116-ENSRNOP00000012665"/>
<dbReference type="Ensembl" id="ENSRNOT00000012665.6">
    <property type="protein sequence ID" value="ENSRNOP00000012665.4"/>
    <property type="gene ID" value="ENSRNOG00000009313.6"/>
</dbReference>
<dbReference type="GeneID" id="116565"/>
<dbReference type="KEGG" id="rno:116565"/>
<dbReference type="AGR" id="RGD:620700"/>
<dbReference type="CTD" id="4043"/>
<dbReference type="RGD" id="620700">
    <property type="gene designation" value="Lrpap1"/>
</dbReference>
<dbReference type="eggNOG" id="KOG3956">
    <property type="taxonomic scope" value="Eukaryota"/>
</dbReference>
<dbReference type="GeneTree" id="ENSGT00390000004855"/>
<dbReference type="HOGENOM" id="CLU_064512_0_0_1"/>
<dbReference type="InParanoid" id="Q99068"/>
<dbReference type="OMA" id="QEFEHHQ"/>
<dbReference type="OrthoDB" id="5817428at2759"/>
<dbReference type="PhylomeDB" id="Q99068"/>
<dbReference type="TreeFam" id="TF320678"/>
<dbReference type="PRO" id="PR:Q99068"/>
<dbReference type="Proteomes" id="UP000002494">
    <property type="component" value="Chromosome 14"/>
</dbReference>
<dbReference type="Bgee" id="ENSRNOG00000009313">
    <property type="expression patterns" value="Expressed in adult mammalian kidney and 19 other cell types or tissues"/>
</dbReference>
<dbReference type="GO" id="GO:0009986">
    <property type="term" value="C:cell surface"/>
    <property type="evidence" value="ECO:0007669"/>
    <property type="project" value="UniProtKB-SubCell"/>
</dbReference>
<dbReference type="GO" id="GO:0005801">
    <property type="term" value="C:cis-Golgi network"/>
    <property type="evidence" value="ECO:0000250"/>
    <property type="project" value="UniProtKB"/>
</dbReference>
<dbReference type="GO" id="GO:0012505">
    <property type="term" value="C:endomembrane system"/>
    <property type="evidence" value="ECO:0000318"/>
    <property type="project" value="GO_Central"/>
</dbReference>
<dbReference type="GO" id="GO:0005793">
    <property type="term" value="C:endoplasmic reticulum-Golgi intermediate compartment"/>
    <property type="evidence" value="ECO:0000250"/>
    <property type="project" value="UniProtKB"/>
</dbReference>
<dbReference type="GO" id="GO:0005768">
    <property type="term" value="C:endosome"/>
    <property type="evidence" value="ECO:0000250"/>
    <property type="project" value="UniProtKB"/>
</dbReference>
<dbReference type="GO" id="GO:0031904">
    <property type="term" value="C:endosome lumen"/>
    <property type="evidence" value="ECO:0007669"/>
    <property type="project" value="UniProtKB-SubCell"/>
</dbReference>
<dbReference type="GO" id="GO:0005794">
    <property type="term" value="C:Golgi apparatus"/>
    <property type="evidence" value="ECO:0000250"/>
    <property type="project" value="UniProtKB"/>
</dbReference>
<dbReference type="GO" id="GO:0005796">
    <property type="term" value="C:Golgi lumen"/>
    <property type="evidence" value="ECO:0007669"/>
    <property type="project" value="UniProtKB-SubCell"/>
</dbReference>
<dbReference type="GO" id="GO:0005886">
    <property type="term" value="C:plasma membrane"/>
    <property type="evidence" value="ECO:0000266"/>
    <property type="project" value="RGD"/>
</dbReference>
<dbReference type="GO" id="GO:0048237">
    <property type="term" value="C:rough endoplasmic reticulum lumen"/>
    <property type="evidence" value="ECO:0000314"/>
    <property type="project" value="RGD"/>
</dbReference>
<dbReference type="GO" id="GO:0031982">
    <property type="term" value="C:vesicle"/>
    <property type="evidence" value="ECO:0000314"/>
    <property type="project" value="RGD"/>
</dbReference>
<dbReference type="GO" id="GO:0008201">
    <property type="term" value="F:heparin binding"/>
    <property type="evidence" value="ECO:0007669"/>
    <property type="project" value="UniProtKB-KW"/>
</dbReference>
<dbReference type="GO" id="GO:0035473">
    <property type="term" value="F:lipase binding"/>
    <property type="evidence" value="ECO:0000353"/>
    <property type="project" value="RGD"/>
</dbReference>
<dbReference type="GO" id="GO:0050750">
    <property type="term" value="F:low-density lipoprotein particle receptor binding"/>
    <property type="evidence" value="ECO:0000250"/>
    <property type="project" value="UniProtKB"/>
</dbReference>
<dbReference type="GO" id="GO:0048019">
    <property type="term" value="F:receptor antagonist activity"/>
    <property type="evidence" value="ECO:0000266"/>
    <property type="project" value="RGD"/>
</dbReference>
<dbReference type="GO" id="GO:0048018">
    <property type="term" value="F:receptor ligand activity"/>
    <property type="evidence" value="ECO:0000266"/>
    <property type="project" value="RGD"/>
</dbReference>
<dbReference type="GO" id="GO:0070326">
    <property type="term" value="F:very-low-density lipoprotein particle receptor binding"/>
    <property type="evidence" value="ECO:0000266"/>
    <property type="project" value="RGD"/>
</dbReference>
<dbReference type="GO" id="GO:0150093">
    <property type="term" value="P:amyloid-beta clearance by transcytosis"/>
    <property type="evidence" value="ECO:0000266"/>
    <property type="project" value="RGD"/>
</dbReference>
<dbReference type="GO" id="GO:1900222">
    <property type="term" value="P:negative regulation of amyloid-beta clearance"/>
    <property type="evidence" value="ECO:0000266"/>
    <property type="project" value="RGD"/>
</dbReference>
<dbReference type="GO" id="GO:0002091">
    <property type="term" value="P:negative regulation of receptor internalization"/>
    <property type="evidence" value="ECO:0000266"/>
    <property type="project" value="RGD"/>
</dbReference>
<dbReference type="GO" id="GO:0010916">
    <property type="term" value="P:negative regulation of very-low-density lipoprotein particle clearance"/>
    <property type="evidence" value="ECO:0000266"/>
    <property type="project" value="RGD"/>
</dbReference>
<dbReference type="GO" id="GO:0048259">
    <property type="term" value="P:regulation of receptor-mediated endocytosis"/>
    <property type="evidence" value="ECO:0000250"/>
    <property type="project" value="UniProtKB"/>
</dbReference>
<dbReference type="GO" id="GO:0007165">
    <property type="term" value="P:signal transduction"/>
    <property type="evidence" value="ECO:0000266"/>
    <property type="project" value="RGD"/>
</dbReference>
<dbReference type="CDD" id="cd14806">
    <property type="entry name" value="RAP_D1"/>
    <property type="match status" value="1"/>
</dbReference>
<dbReference type="CDD" id="cd14807">
    <property type="entry name" value="RAP_D2"/>
    <property type="match status" value="1"/>
</dbReference>
<dbReference type="CDD" id="cd14808">
    <property type="entry name" value="RAP_D3"/>
    <property type="match status" value="1"/>
</dbReference>
<dbReference type="FunFam" id="1.20.81.10:FF:000001">
    <property type="entry name" value="Alpha-2-macroglobulin receptor-associated protein"/>
    <property type="match status" value="1"/>
</dbReference>
<dbReference type="Gene3D" id="1.20.81.10">
    <property type="entry name" value="RAP domain"/>
    <property type="match status" value="3"/>
</dbReference>
<dbReference type="InterPro" id="IPR038003">
    <property type="entry name" value="A2-macroglobuin_RAP"/>
</dbReference>
<dbReference type="InterPro" id="IPR010483">
    <property type="entry name" value="Alpha_2_MRAP_C"/>
</dbReference>
<dbReference type="InterPro" id="IPR009066">
    <property type="entry name" value="MG_RAP_rcpt_1"/>
</dbReference>
<dbReference type="InterPro" id="IPR038001">
    <property type="entry name" value="RAP_D2"/>
</dbReference>
<dbReference type="InterPro" id="IPR037999">
    <property type="entry name" value="RAP_D3"/>
</dbReference>
<dbReference type="InterPro" id="IPR036744">
    <property type="entry name" value="RAP_sf"/>
</dbReference>
<dbReference type="PANTHER" id="PTHR16560">
    <property type="entry name" value="ALPHA-2-MACROGLOBULIN RECEPTOR-ASSOCIATED PROTEIN"/>
    <property type="match status" value="1"/>
</dbReference>
<dbReference type="PANTHER" id="PTHR16560:SF2">
    <property type="entry name" value="ALPHA-2-MACROGLOBULIN RECEPTOR-ASSOCIATED PROTEIN"/>
    <property type="match status" value="1"/>
</dbReference>
<dbReference type="Pfam" id="PF06401">
    <property type="entry name" value="Alpha-2-MRAP_C"/>
    <property type="match status" value="1"/>
</dbReference>
<dbReference type="Pfam" id="PF06400">
    <property type="entry name" value="Alpha-2-MRAP_N"/>
    <property type="match status" value="1"/>
</dbReference>
<dbReference type="SUPFAM" id="SSF47045">
    <property type="entry name" value="RAP domain-like"/>
    <property type="match status" value="3"/>
</dbReference>
<dbReference type="PROSITE" id="PS00014">
    <property type="entry name" value="ER_TARGET"/>
    <property type="match status" value="1"/>
</dbReference>
<feature type="signal peptide" evidence="3">
    <location>
        <begin position="1"/>
        <end position="33"/>
    </location>
</feature>
<feature type="chain" id="PRO_0000020726" description="Alpha-2-macroglobulin receptor-associated protein">
    <location>
        <begin position="34"/>
        <end position="360"/>
    </location>
</feature>
<feature type="region of interest" description="LDL receptor binding" evidence="3">
    <location>
        <begin position="240"/>
        <end position="356"/>
    </location>
</feature>
<feature type="coiled-coil region" evidence="3">
    <location>
        <begin position="222"/>
        <end position="302"/>
    </location>
</feature>
<feature type="short sequence motif" description="Prevents secretion from ER" evidence="1">
    <location>
        <begin position="357"/>
        <end position="360"/>
    </location>
</feature>
<feature type="modified residue" description="Phosphoserine" evidence="7">
    <location>
        <position position="53"/>
    </location>
</feature>
<feature type="modified residue" description="Phosphoserine" evidence="2">
    <location>
        <position position="138"/>
    </location>
</feature>
<feature type="glycosylation site" description="N-linked (GlcNAc...) asparagine" evidence="3">
    <location>
        <position position="271"/>
    </location>
</feature>
<feature type="sequence conflict" description="In Ref. 3; AAA41269." evidence="5" ref="3">
    <original>YSR</original>
    <variation>RSA</variation>
    <location>
        <begin position="38"/>
        <end position="40"/>
    </location>
</feature>
<feature type="sequence conflict" description="In Ref. 3." evidence="5" ref="3">
    <original>KFSSEELDKLWREF</original>
    <variation>ISVRLTSCARV</variation>
    <location>
        <begin position="166"/>
        <end position="179"/>
    </location>
</feature>
<feature type="sequence conflict" description="In Ref. 3; AAA41269." evidence="5" ref="3">
    <original>GYG</original>
    <variation>LR</variation>
    <location>
        <begin position="248"/>
        <end position="250"/>
    </location>
</feature>
<feature type="helix" evidence="8">
    <location>
        <begin position="60"/>
        <end position="71"/>
    </location>
</feature>
<feature type="helix" evidence="8">
    <location>
        <begin position="76"/>
        <end position="101"/>
    </location>
</feature>
<feature type="helix" evidence="8">
    <location>
        <begin position="109"/>
        <end position="124"/>
    </location>
</feature>
<feature type="helix" evidence="9">
    <location>
        <begin position="258"/>
        <end position="268"/>
    </location>
</feature>
<feature type="helix" evidence="9">
    <location>
        <begin position="274"/>
        <end position="314"/>
    </location>
</feature>
<feature type="helix" evidence="9">
    <location>
        <begin position="317"/>
        <end position="357"/>
    </location>
</feature>